<name>GUN1_SCLSC</name>
<reference key="1">
    <citation type="journal article" date="1991" name="Biochim. Biophys. Acta">
        <title>Purification and characterization of two endo-beta-1,4-D-glucanases from Sclerotinia sclerotiorum.</title>
        <authorList>
            <person name="Waksman G."/>
        </authorList>
    </citation>
    <scope>PROTEIN SEQUENCE</scope>
</reference>
<comment type="catalytic activity">
    <reaction>
        <text>Endohydrolysis of (1-&gt;4)-beta-D-glucosidic linkages in cellulose, lichenin and cereal beta-D-glucans.</text>
        <dbReference type="EC" id="3.2.1.4"/>
    </reaction>
</comment>
<comment type="miscellaneous">
    <text>Active towards carboxymethyl cellulose and 4-methylumbelliferyl cellobioside.</text>
</comment>
<sequence length="34" mass="3453">AXSGKLQWIGASESGAEFGQGNLPGVVGTDYTFP</sequence>
<accession>P21833</accession>
<proteinExistence type="evidence at protein level"/>
<dbReference type="EC" id="3.2.1.4"/>
<dbReference type="PIR" id="S13662">
    <property type="entry name" value="S13662"/>
</dbReference>
<dbReference type="BRENDA" id="3.2.1.4">
    <property type="organism ID" value="5625"/>
</dbReference>
<dbReference type="GO" id="GO:0008810">
    <property type="term" value="F:cellulase activity"/>
    <property type="evidence" value="ECO:0007669"/>
    <property type="project" value="UniProtKB-EC"/>
</dbReference>
<dbReference type="GO" id="GO:0030245">
    <property type="term" value="P:cellulose catabolic process"/>
    <property type="evidence" value="ECO:0007669"/>
    <property type="project" value="UniProtKB-KW"/>
</dbReference>
<protein>
    <recommendedName>
        <fullName>Endoglucanase 1</fullName>
        <shortName>EG1</shortName>
        <ecNumber>3.2.1.4</ecNumber>
    </recommendedName>
    <alternativeName>
        <fullName>Cellulase</fullName>
    </alternativeName>
    <alternativeName>
        <fullName>Endo-1,4-beta-glucanase</fullName>
    </alternativeName>
</protein>
<keyword id="KW-0119">Carbohydrate metabolism</keyword>
<keyword id="KW-0136">Cellulose degradation</keyword>
<keyword id="KW-0903">Direct protein sequencing</keyword>
<keyword id="KW-0326">Glycosidase</keyword>
<keyword id="KW-0378">Hydrolase</keyword>
<keyword id="KW-0624">Polysaccharide degradation</keyword>
<feature type="chain" id="PRO_0000184078" description="Endoglucanase 1">
    <location>
        <begin position="1"/>
        <end position="34" status="greater than"/>
    </location>
</feature>
<feature type="non-terminal residue">
    <location>
        <position position="34"/>
    </location>
</feature>
<organism>
    <name type="scientific">Sclerotinia sclerotiorum</name>
    <name type="common">White mold</name>
    <name type="synonym">Whetzelinia sclerotiorum</name>
    <dbReference type="NCBI Taxonomy" id="5180"/>
    <lineage>
        <taxon>Eukaryota</taxon>
        <taxon>Fungi</taxon>
        <taxon>Dikarya</taxon>
        <taxon>Ascomycota</taxon>
        <taxon>Pezizomycotina</taxon>
        <taxon>Leotiomycetes</taxon>
        <taxon>Helotiales</taxon>
        <taxon>Sclerotiniaceae</taxon>
        <taxon>Sclerotinia</taxon>
    </lineage>
</organism>